<proteinExistence type="inferred from homology"/>
<sequence length="432" mass="47345">MGNNVVVLGTQWGDEGKGKIVDLLTERAKYVVRYQGGHNAGHTLVINGEKTVLHLIPSGILRENVTSIIGNGVVLSPAALMKEMKELEDRGIPVRERLLLSEACPLILDYHVALDNAREKARGAKAIGTTGRGIGPAYEDKVARRGLRVGDLFDKETFAEKLKEVMEYHNFQLVNYYKAEAVDYQKVLDDTMAVADILTSMVVDVSDLLDQARQRGDFVMFEGAQGTLLDIDHGTYPYVTSSNTTAGGVATGSGLGPRYVDYVLGILKAYSTRVGAGPFPTELFDETGEFLCKQGNEFGATTGRRRRTGWLDTVAVRRAVQLNSLSGFCLTKLDVLDGLKEVKLCVAYRMPDGREVTTTPLAADDWKGVEPIYETMPGWSESTFGVKDRSGLPQAALNYIKRIEELTGVPIDIISTGPDRTETMILRDPFDA</sequence>
<dbReference type="EC" id="6.3.4.4" evidence="1"/>
<dbReference type="EMBL" id="CP000946">
    <property type="protein sequence ID" value="ACA79440.1"/>
    <property type="molecule type" value="Genomic_DNA"/>
</dbReference>
<dbReference type="RefSeq" id="WP_000527955.1">
    <property type="nucleotide sequence ID" value="NZ_MTFT01000012.1"/>
</dbReference>
<dbReference type="SMR" id="B1IT29"/>
<dbReference type="GeneID" id="75202411"/>
<dbReference type="KEGG" id="ecl:EcolC_3836"/>
<dbReference type="HOGENOM" id="CLU_029848_0_0_6"/>
<dbReference type="UniPathway" id="UPA00075">
    <property type="reaction ID" value="UER00335"/>
</dbReference>
<dbReference type="GO" id="GO:0005737">
    <property type="term" value="C:cytoplasm"/>
    <property type="evidence" value="ECO:0007669"/>
    <property type="project" value="UniProtKB-SubCell"/>
</dbReference>
<dbReference type="GO" id="GO:0004019">
    <property type="term" value="F:adenylosuccinate synthase activity"/>
    <property type="evidence" value="ECO:0007669"/>
    <property type="project" value="UniProtKB-UniRule"/>
</dbReference>
<dbReference type="GO" id="GO:0005525">
    <property type="term" value="F:GTP binding"/>
    <property type="evidence" value="ECO:0007669"/>
    <property type="project" value="UniProtKB-UniRule"/>
</dbReference>
<dbReference type="GO" id="GO:0000287">
    <property type="term" value="F:magnesium ion binding"/>
    <property type="evidence" value="ECO:0007669"/>
    <property type="project" value="UniProtKB-UniRule"/>
</dbReference>
<dbReference type="GO" id="GO:0044208">
    <property type="term" value="P:'de novo' AMP biosynthetic process"/>
    <property type="evidence" value="ECO:0007669"/>
    <property type="project" value="UniProtKB-UniRule"/>
</dbReference>
<dbReference type="GO" id="GO:0046040">
    <property type="term" value="P:IMP metabolic process"/>
    <property type="evidence" value="ECO:0007669"/>
    <property type="project" value="TreeGrafter"/>
</dbReference>
<dbReference type="CDD" id="cd03108">
    <property type="entry name" value="AdSS"/>
    <property type="match status" value="1"/>
</dbReference>
<dbReference type="FunFam" id="1.10.300.10:FF:000001">
    <property type="entry name" value="Adenylosuccinate synthetase"/>
    <property type="match status" value="1"/>
</dbReference>
<dbReference type="FunFam" id="3.90.170.10:FF:000001">
    <property type="entry name" value="Adenylosuccinate synthetase"/>
    <property type="match status" value="1"/>
</dbReference>
<dbReference type="Gene3D" id="3.40.440.10">
    <property type="entry name" value="Adenylosuccinate Synthetase, subunit A, domain 1"/>
    <property type="match status" value="1"/>
</dbReference>
<dbReference type="Gene3D" id="1.10.300.10">
    <property type="entry name" value="Adenylosuccinate Synthetase, subunit A, domain 2"/>
    <property type="match status" value="1"/>
</dbReference>
<dbReference type="Gene3D" id="3.90.170.10">
    <property type="entry name" value="Adenylosuccinate Synthetase, subunit A, domain 3"/>
    <property type="match status" value="1"/>
</dbReference>
<dbReference type="HAMAP" id="MF_00011">
    <property type="entry name" value="Adenylosucc_synth"/>
    <property type="match status" value="1"/>
</dbReference>
<dbReference type="InterPro" id="IPR018220">
    <property type="entry name" value="Adenylosuccin_syn_GTP-bd"/>
</dbReference>
<dbReference type="InterPro" id="IPR033128">
    <property type="entry name" value="Adenylosuccin_syn_Lys_AS"/>
</dbReference>
<dbReference type="InterPro" id="IPR042109">
    <property type="entry name" value="Adenylosuccinate_synth_dom1"/>
</dbReference>
<dbReference type="InterPro" id="IPR042110">
    <property type="entry name" value="Adenylosuccinate_synth_dom2"/>
</dbReference>
<dbReference type="InterPro" id="IPR042111">
    <property type="entry name" value="Adenylosuccinate_synth_dom3"/>
</dbReference>
<dbReference type="InterPro" id="IPR001114">
    <property type="entry name" value="Adenylosuccinate_synthetase"/>
</dbReference>
<dbReference type="InterPro" id="IPR027417">
    <property type="entry name" value="P-loop_NTPase"/>
</dbReference>
<dbReference type="NCBIfam" id="NF002223">
    <property type="entry name" value="PRK01117.1"/>
    <property type="match status" value="1"/>
</dbReference>
<dbReference type="NCBIfam" id="TIGR00184">
    <property type="entry name" value="purA"/>
    <property type="match status" value="1"/>
</dbReference>
<dbReference type="PANTHER" id="PTHR11846">
    <property type="entry name" value="ADENYLOSUCCINATE SYNTHETASE"/>
    <property type="match status" value="1"/>
</dbReference>
<dbReference type="PANTHER" id="PTHR11846:SF0">
    <property type="entry name" value="ADENYLOSUCCINATE SYNTHETASE"/>
    <property type="match status" value="1"/>
</dbReference>
<dbReference type="Pfam" id="PF00709">
    <property type="entry name" value="Adenylsucc_synt"/>
    <property type="match status" value="1"/>
</dbReference>
<dbReference type="SMART" id="SM00788">
    <property type="entry name" value="Adenylsucc_synt"/>
    <property type="match status" value="1"/>
</dbReference>
<dbReference type="SUPFAM" id="SSF52540">
    <property type="entry name" value="P-loop containing nucleoside triphosphate hydrolases"/>
    <property type="match status" value="1"/>
</dbReference>
<dbReference type="PROSITE" id="PS01266">
    <property type="entry name" value="ADENYLOSUCCIN_SYN_1"/>
    <property type="match status" value="1"/>
</dbReference>
<dbReference type="PROSITE" id="PS00513">
    <property type="entry name" value="ADENYLOSUCCIN_SYN_2"/>
    <property type="match status" value="1"/>
</dbReference>
<name>PURA_ECOLC</name>
<comment type="function">
    <text evidence="1">Plays an important role in the de novo pathway of purine nucleotide biosynthesis. Catalyzes the first committed step in the biosynthesis of AMP from IMP.</text>
</comment>
<comment type="catalytic activity">
    <reaction evidence="1">
        <text>IMP + L-aspartate + GTP = N(6)-(1,2-dicarboxyethyl)-AMP + GDP + phosphate + 2 H(+)</text>
        <dbReference type="Rhea" id="RHEA:15753"/>
        <dbReference type="ChEBI" id="CHEBI:15378"/>
        <dbReference type="ChEBI" id="CHEBI:29991"/>
        <dbReference type="ChEBI" id="CHEBI:37565"/>
        <dbReference type="ChEBI" id="CHEBI:43474"/>
        <dbReference type="ChEBI" id="CHEBI:57567"/>
        <dbReference type="ChEBI" id="CHEBI:58053"/>
        <dbReference type="ChEBI" id="CHEBI:58189"/>
        <dbReference type="EC" id="6.3.4.4"/>
    </reaction>
</comment>
<comment type="cofactor">
    <cofactor evidence="1">
        <name>Mg(2+)</name>
        <dbReference type="ChEBI" id="CHEBI:18420"/>
    </cofactor>
    <text evidence="1">Binds 1 Mg(2+) ion per subunit.</text>
</comment>
<comment type="pathway">
    <text evidence="1">Purine metabolism; AMP biosynthesis via de novo pathway; AMP from IMP: step 1/2.</text>
</comment>
<comment type="subunit">
    <text evidence="1">Homodimer.</text>
</comment>
<comment type="subcellular location">
    <subcellularLocation>
        <location evidence="1">Cytoplasm</location>
    </subcellularLocation>
</comment>
<comment type="similarity">
    <text evidence="1">Belongs to the adenylosuccinate synthetase family.</text>
</comment>
<keyword id="KW-0963">Cytoplasm</keyword>
<keyword id="KW-0342">GTP-binding</keyword>
<keyword id="KW-0436">Ligase</keyword>
<keyword id="KW-0460">Magnesium</keyword>
<keyword id="KW-0479">Metal-binding</keyword>
<keyword id="KW-0547">Nucleotide-binding</keyword>
<keyword id="KW-0658">Purine biosynthesis</keyword>
<reference key="1">
    <citation type="submission" date="2008-02" db="EMBL/GenBank/DDBJ databases">
        <title>Complete sequence of Escherichia coli C str. ATCC 8739.</title>
        <authorList>
            <person name="Copeland A."/>
            <person name="Lucas S."/>
            <person name="Lapidus A."/>
            <person name="Glavina del Rio T."/>
            <person name="Dalin E."/>
            <person name="Tice H."/>
            <person name="Bruce D."/>
            <person name="Goodwin L."/>
            <person name="Pitluck S."/>
            <person name="Kiss H."/>
            <person name="Brettin T."/>
            <person name="Detter J.C."/>
            <person name="Han C."/>
            <person name="Kuske C.R."/>
            <person name="Schmutz J."/>
            <person name="Larimer F."/>
            <person name="Land M."/>
            <person name="Hauser L."/>
            <person name="Kyrpides N."/>
            <person name="Mikhailova N."/>
            <person name="Ingram L."/>
            <person name="Richardson P."/>
        </authorList>
    </citation>
    <scope>NUCLEOTIDE SEQUENCE [LARGE SCALE GENOMIC DNA]</scope>
    <source>
        <strain>ATCC 8739 / DSM 1576 / NBRC 3972 / NCIMB 8545 / WDCM 00012 / Crooks</strain>
    </source>
</reference>
<feature type="chain" id="PRO_1000073944" description="Adenylosuccinate synthetase">
    <location>
        <begin position="1"/>
        <end position="432"/>
    </location>
</feature>
<feature type="active site" description="Proton acceptor" evidence="1">
    <location>
        <position position="14"/>
    </location>
</feature>
<feature type="active site" description="Proton donor" evidence="1">
    <location>
        <position position="42"/>
    </location>
</feature>
<feature type="binding site" evidence="1">
    <location>
        <begin position="13"/>
        <end position="19"/>
    </location>
    <ligand>
        <name>GTP</name>
        <dbReference type="ChEBI" id="CHEBI:37565"/>
    </ligand>
</feature>
<feature type="binding site" description="in other chain" evidence="1">
    <location>
        <begin position="14"/>
        <end position="17"/>
    </location>
    <ligand>
        <name>IMP</name>
        <dbReference type="ChEBI" id="CHEBI:58053"/>
        <note>ligand shared between dimeric partners</note>
    </ligand>
</feature>
<feature type="binding site" evidence="1">
    <location>
        <position position="14"/>
    </location>
    <ligand>
        <name>Mg(2+)</name>
        <dbReference type="ChEBI" id="CHEBI:18420"/>
    </ligand>
</feature>
<feature type="binding site" description="in other chain" evidence="1">
    <location>
        <begin position="39"/>
        <end position="42"/>
    </location>
    <ligand>
        <name>IMP</name>
        <dbReference type="ChEBI" id="CHEBI:58053"/>
        <note>ligand shared between dimeric partners</note>
    </ligand>
</feature>
<feature type="binding site" evidence="1">
    <location>
        <begin position="41"/>
        <end position="43"/>
    </location>
    <ligand>
        <name>GTP</name>
        <dbReference type="ChEBI" id="CHEBI:37565"/>
    </ligand>
</feature>
<feature type="binding site" evidence="1">
    <location>
        <position position="41"/>
    </location>
    <ligand>
        <name>Mg(2+)</name>
        <dbReference type="ChEBI" id="CHEBI:18420"/>
    </ligand>
</feature>
<feature type="binding site" description="in other chain" evidence="1">
    <location>
        <position position="130"/>
    </location>
    <ligand>
        <name>IMP</name>
        <dbReference type="ChEBI" id="CHEBI:58053"/>
        <note>ligand shared between dimeric partners</note>
    </ligand>
</feature>
<feature type="binding site" evidence="1">
    <location>
        <position position="144"/>
    </location>
    <ligand>
        <name>IMP</name>
        <dbReference type="ChEBI" id="CHEBI:58053"/>
        <note>ligand shared between dimeric partners</note>
    </ligand>
</feature>
<feature type="binding site" description="in other chain" evidence="1">
    <location>
        <position position="225"/>
    </location>
    <ligand>
        <name>IMP</name>
        <dbReference type="ChEBI" id="CHEBI:58053"/>
        <note>ligand shared between dimeric partners</note>
    </ligand>
</feature>
<feature type="binding site" description="in other chain" evidence="1">
    <location>
        <position position="240"/>
    </location>
    <ligand>
        <name>IMP</name>
        <dbReference type="ChEBI" id="CHEBI:58053"/>
        <note>ligand shared between dimeric partners</note>
    </ligand>
</feature>
<feature type="binding site" evidence="1">
    <location>
        <begin position="300"/>
        <end position="306"/>
    </location>
    <ligand>
        <name>substrate</name>
    </ligand>
</feature>
<feature type="binding site" description="in other chain" evidence="1">
    <location>
        <position position="304"/>
    </location>
    <ligand>
        <name>IMP</name>
        <dbReference type="ChEBI" id="CHEBI:58053"/>
        <note>ligand shared between dimeric partners</note>
    </ligand>
</feature>
<feature type="binding site" evidence="1">
    <location>
        <position position="306"/>
    </location>
    <ligand>
        <name>GTP</name>
        <dbReference type="ChEBI" id="CHEBI:37565"/>
    </ligand>
</feature>
<feature type="binding site" evidence="1">
    <location>
        <begin position="332"/>
        <end position="334"/>
    </location>
    <ligand>
        <name>GTP</name>
        <dbReference type="ChEBI" id="CHEBI:37565"/>
    </ligand>
</feature>
<feature type="binding site" evidence="1">
    <location>
        <begin position="415"/>
        <end position="417"/>
    </location>
    <ligand>
        <name>GTP</name>
        <dbReference type="ChEBI" id="CHEBI:37565"/>
    </ligand>
</feature>
<accession>B1IT29</accession>
<evidence type="ECO:0000255" key="1">
    <source>
        <dbReference type="HAMAP-Rule" id="MF_00011"/>
    </source>
</evidence>
<gene>
    <name evidence="1" type="primary">purA</name>
    <name type="ordered locus">EcolC_3836</name>
</gene>
<protein>
    <recommendedName>
        <fullName evidence="1">Adenylosuccinate synthetase</fullName>
        <shortName evidence="1">AMPSase</shortName>
        <shortName evidence="1">AdSS</shortName>
        <ecNumber evidence="1">6.3.4.4</ecNumber>
    </recommendedName>
    <alternativeName>
        <fullName evidence="1">IMP--aspartate ligase</fullName>
    </alternativeName>
</protein>
<organism>
    <name type="scientific">Escherichia coli (strain ATCC 8739 / DSM 1576 / NBRC 3972 / NCIMB 8545 / WDCM 00012 / Crooks)</name>
    <dbReference type="NCBI Taxonomy" id="481805"/>
    <lineage>
        <taxon>Bacteria</taxon>
        <taxon>Pseudomonadati</taxon>
        <taxon>Pseudomonadota</taxon>
        <taxon>Gammaproteobacteria</taxon>
        <taxon>Enterobacterales</taxon>
        <taxon>Enterobacteriaceae</taxon>
        <taxon>Escherichia</taxon>
    </lineage>
</organism>